<reference key="1">
    <citation type="submission" date="1998-03" db="EMBL/GenBank/DDBJ databases">
        <title>Ribosomal protein L35 from Thermus thermophilus.</title>
        <authorList>
            <person name="Rak A."/>
            <person name="Wolf-Watz M."/>
            <person name="Kalinin A."/>
            <person name="Garber M.B."/>
        </authorList>
    </citation>
    <scope>NUCLEOTIDE SEQUENCE [GENOMIC DNA]</scope>
    <source>
        <strain>VK1</strain>
    </source>
</reference>
<protein>
    <recommendedName>
        <fullName evidence="2">Large ribosomal subunit protein bL35</fullName>
    </recommendedName>
    <alternativeName>
        <fullName evidence="3">50S ribosomal protein L35</fullName>
    </alternativeName>
</protein>
<proteinExistence type="evidence at protein level"/>
<evidence type="ECO:0000250" key="1"/>
<evidence type="ECO:0000255" key="2">
    <source>
        <dbReference type="HAMAP-Rule" id="MF_00514"/>
    </source>
</evidence>
<evidence type="ECO:0000305" key="3"/>
<name>RL35_THETH</name>
<comment type="similarity">
    <text evidence="2">Belongs to the bacterial ribosomal protein bL35 family.</text>
</comment>
<accession>P80341</accession>
<accession>Q9EVT7</accession>
<organism>
    <name type="scientific">Thermus thermophilus</name>
    <dbReference type="NCBI Taxonomy" id="274"/>
    <lineage>
        <taxon>Bacteria</taxon>
        <taxon>Thermotogati</taxon>
        <taxon>Deinococcota</taxon>
        <taxon>Deinococci</taxon>
        <taxon>Thermales</taxon>
        <taxon>Thermaceae</taxon>
        <taxon>Thermus</taxon>
    </lineage>
</organism>
<feature type="initiator methionine" description="Removed" evidence="1">
    <location>
        <position position="1"/>
    </location>
</feature>
<feature type="chain" id="PRO_0000177444" description="Large ribosomal subunit protein bL35">
    <location>
        <begin position="2"/>
        <end position="65"/>
    </location>
</feature>
<sequence length="65" mass="7484">MPKMKTHKGAKKRVKITASGKVVAMKTGKRHLNWQKSGKEIRQKGRKFVLAKPEAERIKLLLPYE</sequence>
<dbReference type="EMBL" id="AJ224858">
    <property type="protein sequence ID" value="CAC21225.1"/>
    <property type="molecule type" value="Genomic_DNA"/>
</dbReference>
<dbReference type="RefSeq" id="WP_011172638.1">
    <property type="nucleotide sequence ID" value="NZ_VHHQ01000004.1"/>
</dbReference>
<dbReference type="PDB" id="4V5A">
    <property type="method" value="X-ray"/>
    <property type="resolution" value="3.50 A"/>
    <property type="chains" value="B8/D8=2-65"/>
</dbReference>
<dbReference type="PDBsum" id="4V5A"/>
<dbReference type="SMR" id="P80341"/>
<dbReference type="GeneID" id="3169498"/>
<dbReference type="OMA" id="PKIKTHR"/>
<dbReference type="GO" id="GO:0022625">
    <property type="term" value="C:cytosolic large ribosomal subunit"/>
    <property type="evidence" value="ECO:0007669"/>
    <property type="project" value="TreeGrafter"/>
</dbReference>
<dbReference type="GO" id="GO:0003735">
    <property type="term" value="F:structural constituent of ribosome"/>
    <property type="evidence" value="ECO:0007669"/>
    <property type="project" value="InterPro"/>
</dbReference>
<dbReference type="GO" id="GO:0006412">
    <property type="term" value="P:translation"/>
    <property type="evidence" value="ECO:0007669"/>
    <property type="project" value="UniProtKB-UniRule"/>
</dbReference>
<dbReference type="FunFam" id="4.10.410.60:FF:000001">
    <property type="entry name" value="50S ribosomal protein L35"/>
    <property type="match status" value="1"/>
</dbReference>
<dbReference type="Gene3D" id="4.10.410.60">
    <property type="match status" value="1"/>
</dbReference>
<dbReference type="HAMAP" id="MF_00514">
    <property type="entry name" value="Ribosomal_bL35"/>
    <property type="match status" value="1"/>
</dbReference>
<dbReference type="InterPro" id="IPR001706">
    <property type="entry name" value="Ribosomal_bL35"/>
</dbReference>
<dbReference type="InterPro" id="IPR021137">
    <property type="entry name" value="Ribosomal_bL35-like"/>
</dbReference>
<dbReference type="InterPro" id="IPR018265">
    <property type="entry name" value="Ribosomal_bL35_CS"/>
</dbReference>
<dbReference type="InterPro" id="IPR037229">
    <property type="entry name" value="Ribosomal_bL35_sf"/>
</dbReference>
<dbReference type="NCBIfam" id="TIGR00001">
    <property type="entry name" value="rpmI_bact"/>
    <property type="match status" value="1"/>
</dbReference>
<dbReference type="PANTHER" id="PTHR33343">
    <property type="entry name" value="54S RIBOSOMAL PROTEIN BL35M"/>
    <property type="match status" value="1"/>
</dbReference>
<dbReference type="PANTHER" id="PTHR33343:SF1">
    <property type="entry name" value="LARGE RIBOSOMAL SUBUNIT PROTEIN BL35M"/>
    <property type="match status" value="1"/>
</dbReference>
<dbReference type="Pfam" id="PF01632">
    <property type="entry name" value="Ribosomal_L35p"/>
    <property type="match status" value="1"/>
</dbReference>
<dbReference type="PRINTS" id="PR00064">
    <property type="entry name" value="RIBOSOMALL35"/>
</dbReference>
<dbReference type="SUPFAM" id="SSF143034">
    <property type="entry name" value="L35p-like"/>
    <property type="match status" value="1"/>
</dbReference>
<dbReference type="PROSITE" id="PS00936">
    <property type="entry name" value="RIBOSOMAL_L35"/>
    <property type="match status" value="1"/>
</dbReference>
<keyword id="KW-0002">3D-structure</keyword>
<keyword id="KW-0687">Ribonucleoprotein</keyword>
<keyword id="KW-0689">Ribosomal protein</keyword>
<gene>
    <name evidence="2" type="primary">rpmI</name>
    <name evidence="2" type="synonym">rpl35</name>
</gene>